<keyword id="KW-1003">Cell membrane</keyword>
<keyword id="KW-0325">Glycoprotein</keyword>
<keyword id="KW-0472">Membrane</keyword>
<keyword id="KW-0611">Plant defense</keyword>
<keyword id="KW-1185">Reference proteome</keyword>
<keyword id="KW-0812">Transmembrane</keyword>
<keyword id="KW-1133">Transmembrane helix</keyword>
<comment type="function">
    <text evidence="4">Confers resistance to Pseudomonas syringae pv. tomato DC3000 (Pst DC3000).</text>
</comment>
<comment type="subunit">
    <text evidence="4">May form oligomers or be a component of larger protein complex in plasma membranes.</text>
</comment>
<comment type="interaction">
    <interactant intactId="EBI-4461284">
        <id>Q9FNH6</id>
    </interactant>
    <interactant intactId="EBI-1392093">
        <id>Q5ICL9</id>
        <label>NPR4</label>
    </interactant>
    <organismsDiffer>false</organismsDiffer>
    <experiments>3</experiments>
</comment>
<comment type="subcellular location">
    <subcellularLocation>
        <location evidence="4">Cell membrane</location>
        <topology evidence="1">Single-pass membrane protein</topology>
    </subcellularLocation>
</comment>
<comment type="tissue specificity">
    <text evidence="5">Expressed in roots, young and senescing leaves, cauline leaves, stems and siliques.</text>
</comment>
<comment type="induction">
    <text evidence="3 5 6">Accumulates upon infection with avirulent Pseudomonas syringae pv. tomato DC3000 (Pst DC3000) carrying avirulence genes avrRpm1, avrRpt2, avrB, or avrRps4 but not with the virulent Pst DC3000 (PubMed:12059109, Ref.1). Induced by salicylic acid (SA). Accumulates rapidly in local and systemic tissues after wounding (PubMed:12059109). Triggered by spermine, an inducer of pathogenesis-related (PR) genes. Up-regulated by cucumber mosaic virus (CMV-Y and CMV-B2 strains) (PubMed:14666423).</text>
</comment>
<comment type="PTM">
    <text evidence="4">Glycosylated.</text>
</comment>
<reference key="1">
    <citation type="journal article" date="2000" name="Plant Physiol. Biochem.">
        <title>A gene family in Arabidopsis thaliana with sequence similarity to NDR1 and HIN1.</title>
        <authorList>
            <person name="Doermann P."/>
            <person name="Gopalan S."/>
            <person name="He S.Y."/>
            <person name="Benning C."/>
        </authorList>
    </citation>
    <scope>NUCLEOTIDE SEQUENCE [MRNA]</scope>
    <scope>INDUCTION BY PSEUDOMONAS SYRINGAE</scope>
    <scope>GENE FAMILY</scope>
    <scope>NOMENCLATURE</scope>
    <source>
        <strain>cv. Col-2</strain>
    </source>
</reference>
<reference key="2">
    <citation type="submission" date="1998-08" db="EMBL/GenBank/DDBJ databases">
        <title>Signal peptide selection derived cDNAs from Arabidopsis thaliana leaves and guard cells.</title>
        <authorList>
            <person name="Stracke R."/>
            <person name="Palme K."/>
        </authorList>
    </citation>
    <scope>NUCLEOTIDE SEQUENCE [MRNA]</scope>
</reference>
<reference key="3">
    <citation type="journal article" date="1997" name="DNA Res.">
        <title>Structural analysis of Arabidopsis thaliana chromosome 5. II. Sequence features of the regions of 1,044,062 bp covered by thirteen physically assigned P1 clones.</title>
        <authorList>
            <person name="Kotani H."/>
            <person name="Nakamura Y."/>
            <person name="Sato S."/>
            <person name="Kaneko T."/>
            <person name="Asamizu E."/>
            <person name="Miyajima N."/>
            <person name="Tabata S."/>
        </authorList>
    </citation>
    <scope>NUCLEOTIDE SEQUENCE [LARGE SCALE GENOMIC DNA]</scope>
    <source>
        <strain>cv. Columbia</strain>
    </source>
</reference>
<reference key="4">
    <citation type="journal article" date="2017" name="Plant J.">
        <title>Araport11: a complete reannotation of the Arabidopsis thaliana reference genome.</title>
        <authorList>
            <person name="Cheng C.Y."/>
            <person name="Krishnakumar V."/>
            <person name="Chan A.P."/>
            <person name="Thibaud-Nissen F."/>
            <person name="Schobel S."/>
            <person name="Town C.D."/>
        </authorList>
    </citation>
    <scope>GENOME REANNOTATION</scope>
    <source>
        <strain>cv. Columbia</strain>
    </source>
</reference>
<reference key="5">
    <citation type="journal article" date="2003" name="Science">
        <title>Empirical analysis of transcriptional activity in the Arabidopsis genome.</title>
        <authorList>
            <person name="Yamada K."/>
            <person name="Lim J."/>
            <person name="Dale J.M."/>
            <person name="Chen H."/>
            <person name="Shinn P."/>
            <person name="Palm C.J."/>
            <person name="Southwick A.M."/>
            <person name="Wu H.C."/>
            <person name="Kim C.J."/>
            <person name="Nguyen M."/>
            <person name="Pham P.K."/>
            <person name="Cheuk R.F."/>
            <person name="Karlin-Newmann G."/>
            <person name="Liu S.X."/>
            <person name="Lam B."/>
            <person name="Sakano H."/>
            <person name="Wu T."/>
            <person name="Yu G."/>
            <person name="Miranda M."/>
            <person name="Quach H.L."/>
            <person name="Tripp M."/>
            <person name="Chang C.H."/>
            <person name="Lee J.M."/>
            <person name="Toriumi M.J."/>
            <person name="Chan M.M."/>
            <person name="Tang C.C."/>
            <person name="Onodera C.S."/>
            <person name="Deng J.M."/>
            <person name="Akiyama K."/>
            <person name="Ansari Y."/>
            <person name="Arakawa T."/>
            <person name="Banh J."/>
            <person name="Banno F."/>
            <person name="Bowser L."/>
            <person name="Brooks S.Y."/>
            <person name="Carninci P."/>
            <person name="Chao Q."/>
            <person name="Choy N."/>
            <person name="Enju A."/>
            <person name="Goldsmith A.D."/>
            <person name="Gurjal M."/>
            <person name="Hansen N.F."/>
            <person name="Hayashizaki Y."/>
            <person name="Johnson-Hopson C."/>
            <person name="Hsuan V.W."/>
            <person name="Iida K."/>
            <person name="Karnes M."/>
            <person name="Khan S."/>
            <person name="Koesema E."/>
            <person name="Ishida J."/>
            <person name="Jiang P.X."/>
            <person name="Jones T."/>
            <person name="Kawai J."/>
            <person name="Kamiya A."/>
            <person name="Meyers C."/>
            <person name="Nakajima M."/>
            <person name="Narusaka M."/>
            <person name="Seki M."/>
            <person name="Sakurai T."/>
            <person name="Satou M."/>
            <person name="Tamse R."/>
            <person name="Vaysberg M."/>
            <person name="Wallender E.K."/>
            <person name="Wong C."/>
            <person name="Yamamura Y."/>
            <person name="Yuan S."/>
            <person name="Shinozaki K."/>
            <person name="Davis R.W."/>
            <person name="Theologis A."/>
            <person name="Ecker J.R."/>
        </authorList>
    </citation>
    <scope>NUCLEOTIDE SEQUENCE [LARGE SCALE MRNA]</scope>
    <source>
        <strain>cv. Columbia</strain>
    </source>
</reference>
<reference key="6">
    <citation type="journal article" date="2008" name="Genetics">
        <title>Low levels of polymorphism in genes that control the activation of defense response in Arabidopsis thaliana.</title>
        <authorList>
            <person name="Bakker E.G."/>
            <person name="Traw M.B."/>
            <person name="Toomajian C."/>
            <person name="Kreitman M."/>
            <person name="Bergelson J."/>
        </authorList>
    </citation>
    <scope>NUCLEOTIDE SEQUENCE [GENOMIC DNA] OF 39-210</scope>
    <source>
        <strain>cv. Ag-0</strain>
        <strain>cv. Bay-0</strain>
        <strain>cv. Bil-5</strain>
        <strain>cv. Bil-7</strain>
        <strain>cv. Bor-1</strain>
        <strain>cv. Bor-4</strain>
        <strain>cv. Br-0</strain>
        <strain>cv. C24</strain>
        <strain>cv. Columbia</strain>
        <strain>cv. Ct-1</strain>
        <strain>cv. Cvi-0</strain>
        <strain>cv. Ed-1</strain>
        <strain>cv. Ed-2</strain>
        <strain>cv. Edi-0</strain>
        <strain>cv. Est-1</strain>
        <strain>cv. Fab-2</strain>
        <strain>cv. Fab-4</strain>
        <strain>cv. Fei-0</strain>
        <strain>cv. Ga-0</strain>
        <strain>cv. Gy-0</strain>
        <strain>cv. HR-10</strain>
        <strain>cv. HR-5</strain>
        <strain>cv. Kas-2</strain>
        <strain>cv. KNO-10</strain>
        <strain>cv. Kon</strain>
        <strain>cv. KZ-1</strain>
        <strain>cv. KZ-9</strain>
        <strain>cv. Ler-1</strain>
        <strain>cv. Ll-0</strain>
        <strain>cv. Lov-1</strain>
        <strain>cv. Lov-5</strain>
        <strain>cv. Lp2-2</strain>
        <strain>cv. Lp2-6</strain>
        <strain>cv. Mr-0</strain>
        <strain>cv. Mrk-0</strain>
        <strain>cv. Mt-0</strain>
        <strain>cv. Mz-0</strain>
        <strain>cv. N13 Konchezero</strain>
        <strain>cv. Nd-1</strain>
        <strain>cv. NFA-10</strain>
        <strain>cv. NFA-8</strain>
        <strain>cv. Omo2-1</strain>
        <strain>cv. Omo2-3</strain>
        <strain>cv. Pna-10</strain>
        <strain>cv. Pro-0</strain>
        <strain>cv. Pu2-7</strain>
        <strain>cv. Ra-0</strain>
        <strain>cv. Rmx-A180</strain>
        <strain>cv. RRS-10</strain>
        <strain>cv. Se-0</strain>
        <strain>cv. Sha</strain>
        <strain>cv. Sorbo</strain>
        <strain>cv. Spr1-2</strain>
        <strain>cv. Sq-8</strain>
        <strain>cv. Tamm-2</strain>
        <strain>cv. Tamm-27</strain>
        <strain>cv. Ts-1</strain>
        <strain>cv. Ts-5</strain>
        <strain>cv. Ull2-5</strain>
        <strain>cv. Uod-1</strain>
        <strain>cv. Uod-7</strain>
        <strain>cv. Var2-1</strain>
        <strain>cv. Var2-6</strain>
        <strain>cv. Wa-1</strain>
        <strain>cv. Wassilewskija</strain>
        <strain>cv. Wassilewskija-2</strain>
        <strain>cv. Wei-0</strain>
        <strain>cv. Wt-5</strain>
        <strain>cv. Yo-0</strain>
        <strain>cv. Zdr-1</strain>
        <strain>cv. Zdr-6</strain>
    </source>
</reference>
<reference key="7">
    <citation type="journal article" date="2002" name="Mol. Plant Microbe Interact.">
        <title>NHL25 and NHL3, two NDR1/HIN1-1ike genes in Arabidopsis thaliana with potential role(s) in plant defense.</title>
        <authorList>
            <person name="Varet A."/>
            <person name="Parker J."/>
            <person name="Tornero P."/>
            <person name="Nass N."/>
            <person name="Nuernberger T."/>
            <person name="Dangl J.L."/>
            <person name="Scheel D."/>
            <person name="Lee J."/>
        </authorList>
    </citation>
    <scope>INDUCTION BY PSEUDOMONAS SYRINGAE; WOUNDING AND SALICYLIC ACID</scope>
    <source>
        <strain>cv. Columbia</strain>
    </source>
</reference>
<reference key="8">
    <citation type="journal article" date="2003" name="Plant Physiol.">
        <title>The Arabidopsis NHL3 gene encodes a plasma membrane protein and its overexpression correlates with increased resistance to Pseudomonas syringae pv. tomato DC3000.</title>
        <authorList>
            <person name="Varet A."/>
            <person name="Hause B."/>
            <person name="Hause G."/>
            <person name="Scheel D."/>
            <person name="Lee J."/>
        </authorList>
    </citation>
    <scope>FUNCTION</scope>
    <scope>SUBCELLULAR LOCATION</scope>
    <scope>GLYCOSYLATION</scope>
    <scope>SUBUNIT</scope>
    <source>
        <strain>cv. Columbia</strain>
    </source>
</reference>
<reference key="9">
    <citation type="journal article" date="2004" name="Planta">
        <title>Up-regulation of Arabidopsis thaliana NHL10 in the hypersensitive response to Cucumber mosaic virus infection and in senescing leaves is controlled by signalling pathways that differ in salicylate involvement.</title>
        <authorList>
            <person name="Zheng M.S."/>
            <person name="Takahashi H."/>
            <person name="Miyazaki A."/>
            <person name="Hamamoto H."/>
            <person name="Shah J."/>
            <person name="Yamaguchi I."/>
            <person name="Kusano T."/>
        </authorList>
    </citation>
    <scope>INDUCTION BY SPERMINE AND CUCUMBER MOSAIC VIRUS</scope>
    <scope>TISSUE SPECIFICITY</scope>
    <source>
        <strain>cv. C24</strain>
    </source>
</reference>
<feature type="chain" id="PRO_0000435650" description="NDR1/HIN1-like protein 3">
    <location>
        <begin position="1"/>
        <end position="231"/>
    </location>
</feature>
<feature type="transmembrane region" description="Helical" evidence="1">
    <location>
        <begin position="47"/>
        <end position="67"/>
    </location>
</feature>
<feature type="glycosylation site" description="N-linked (GlcNAc...) asparagine" evidence="2">
    <location>
        <position position="102"/>
    </location>
</feature>
<feature type="glycosylation site" description="N-linked (GlcNAc...) asparagine" evidence="2">
    <location>
        <position position="135"/>
    </location>
</feature>
<feature type="glycosylation site" description="N-linked (GlcNAc...) asparagine" evidence="2">
    <location>
        <position position="145"/>
    </location>
</feature>
<feature type="glycosylation site" description="N-linked (GlcNAc...) asparagine" evidence="2">
    <location>
        <position position="215"/>
    </location>
</feature>
<feature type="sequence conflict" description="In Ref. 1; AAF88023 and 2; AAN60261." evidence="8" ref="1 2">
    <location>
        <position position="117"/>
    </location>
</feature>
<protein>
    <recommendedName>
        <fullName evidence="7">NDR1/HIN1-like protein 3</fullName>
    </recommendedName>
</protein>
<sequence length="231" mass="25947">MADLNGAYYGPSIPPPKKVSHSHGRRGGGCGCLGDCLGCCGCCILSVIFNILITIAVLLGIAALIIWLIFRPNAIKFHVTDAKLTEFTLDPTNNLRYNLDLNFTIRNPNRRIGVYYDEIEVRGYYGDQRFGMSNNISKFYQGHKNTTVVGTKLVGQQLVLLDGGERKDLNEDVNSQIYRIDAKLRLKIRFKFGLIKSWRFKPKIKCDLKVPLTSNSTSGFVFQPTKCDVDF</sequence>
<evidence type="ECO:0000255" key="1"/>
<evidence type="ECO:0000255" key="2">
    <source>
        <dbReference type="PROSITE-ProRule" id="PRU00498"/>
    </source>
</evidence>
<evidence type="ECO:0000269" key="3">
    <source>
    </source>
</evidence>
<evidence type="ECO:0000269" key="4">
    <source>
    </source>
</evidence>
<evidence type="ECO:0000269" key="5">
    <source>
    </source>
</evidence>
<evidence type="ECO:0000269" key="6">
    <source ref="1"/>
</evidence>
<evidence type="ECO:0000303" key="7">
    <source ref="1"/>
</evidence>
<evidence type="ECO:0000305" key="8"/>
<evidence type="ECO:0000312" key="9">
    <source>
        <dbReference type="Araport" id="AT5G06320"/>
    </source>
</evidence>
<evidence type="ECO:0000312" key="10">
    <source>
        <dbReference type="EMBL" id="BAB08954.1"/>
    </source>
</evidence>
<gene>
    <name evidence="7" type="primary">NHL3</name>
    <name evidence="9" type="ordered locus">At5g06320</name>
    <name evidence="10" type="ORF">MHF15.16</name>
</gene>
<organism>
    <name type="scientific">Arabidopsis thaliana</name>
    <name type="common">Mouse-ear cress</name>
    <dbReference type="NCBI Taxonomy" id="3702"/>
    <lineage>
        <taxon>Eukaryota</taxon>
        <taxon>Viridiplantae</taxon>
        <taxon>Streptophyta</taxon>
        <taxon>Embryophyta</taxon>
        <taxon>Tracheophyta</taxon>
        <taxon>Spermatophyta</taxon>
        <taxon>Magnoliopsida</taxon>
        <taxon>eudicotyledons</taxon>
        <taxon>Gunneridae</taxon>
        <taxon>Pentapetalae</taxon>
        <taxon>rosids</taxon>
        <taxon>malvids</taxon>
        <taxon>Brassicales</taxon>
        <taxon>Brassicaceae</taxon>
        <taxon>Camelineae</taxon>
        <taxon>Arabidopsis</taxon>
    </lineage>
</organism>
<dbReference type="EMBL" id="AF264699">
    <property type="protein sequence ID" value="AAF88023.1"/>
    <property type="molecule type" value="mRNA"/>
</dbReference>
<dbReference type="EMBL" id="AF083702">
    <property type="protein sequence ID" value="AAN60261.1"/>
    <property type="molecule type" value="mRNA"/>
</dbReference>
<dbReference type="EMBL" id="AB006700">
    <property type="protein sequence ID" value="BAB08954.1"/>
    <property type="molecule type" value="Genomic_DNA"/>
</dbReference>
<dbReference type="EMBL" id="CP002688">
    <property type="protein sequence ID" value="AED91002.1"/>
    <property type="molecule type" value="Genomic_DNA"/>
</dbReference>
<dbReference type="EMBL" id="AF370332">
    <property type="protein sequence ID" value="AAK44147.2"/>
    <property type="molecule type" value="mRNA"/>
</dbReference>
<dbReference type="EMBL" id="BT000871">
    <property type="protein sequence ID" value="AAN41271.1"/>
    <property type="molecule type" value="mRNA"/>
</dbReference>
<dbReference type="EMBL" id="EU405623">
    <property type="protein sequence ID" value="ABZ03284.1"/>
    <property type="molecule type" value="Genomic_DNA"/>
</dbReference>
<dbReference type="EMBL" id="EU405624">
    <property type="protein sequence ID" value="ABZ03285.1"/>
    <property type="molecule type" value="Genomic_DNA"/>
</dbReference>
<dbReference type="EMBL" id="EU405627">
    <property type="protein sequence ID" value="ABZ03288.1"/>
    <property type="molecule type" value="Genomic_DNA"/>
</dbReference>
<dbReference type="EMBL" id="EU405629">
    <property type="protein sequence ID" value="ABZ03290.1"/>
    <property type="molecule type" value="Genomic_DNA"/>
</dbReference>
<dbReference type="EMBL" id="EU405630">
    <property type="protein sequence ID" value="ABZ03291.1"/>
    <property type="molecule type" value="Genomic_DNA"/>
</dbReference>
<dbReference type="EMBL" id="EU405631">
    <property type="protein sequence ID" value="ABZ03292.1"/>
    <property type="molecule type" value="Genomic_DNA"/>
</dbReference>
<dbReference type="EMBL" id="EU405632">
    <property type="protein sequence ID" value="ABZ03293.1"/>
    <property type="molecule type" value="Genomic_DNA"/>
</dbReference>
<dbReference type="EMBL" id="EU405633">
    <property type="protein sequence ID" value="ABZ03294.1"/>
    <property type="molecule type" value="Genomic_DNA"/>
</dbReference>
<dbReference type="EMBL" id="EU405634">
    <property type="protein sequence ID" value="ABZ03295.1"/>
    <property type="molecule type" value="Genomic_DNA"/>
</dbReference>
<dbReference type="EMBL" id="EU405635">
    <property type="protein sequence ID" value="ABZ03296.1"/>
    <property type="molecule type" value="Genomic_DNA"/>
</dbReference>
<dbReference type="EMBL" id="EU405636">
    <property type="protein sequence ID" value="ABZ03297.1"/>
    <property type="molecule type" value="Genomic_DNA"/>
</dbReference>
<dbReference type="EMBL" id="EU405637">
    <property type="protein sequence ID" value="ABZ03298.1"/>
    <property type="molecule type" value="Genomic_DNA"/>
</dbReference>
<dbReference type="EMBL" id="EU405638">
    <property type="protein sequence ID" value="ABZ03299.1"/>
    <property type="molecule type" value="Genomic_DNA"/>
</dbReference>
<dbReference type="EMBL" id="EU405639">
    <property type="protein sequence ID" value="ABZ03300.1"/>
    <property type="molecule type" value="Genomic_DNA"/>
</dbReference>
<dbReference type="EMBL" id="EU405640">
    <property type="protein sequence ID" value="ABZ03301.1"/>
    <property type="molecule type" value="Genomic_DNA"/>
</dbReference>
<dbReference type="EMBL" id="EU405642">
    <property type="protein sequence ID" value="ABZ03303.1"/>
    <property type="molecule type" value="Genomic_DNA"/>
</dbReference>
<dbReference type="EMBL" id="EU405643">
    <property type="protein sequence ID" value="ABZ03304.1"/>
    <property type="molecule type" value="Genomic_DNA"/>
</dbReference>
<dbReference type="EMBL" id="EU405644">
    <property type="protein sequence ID" value="ABZ03305.1"/>
    <property type="molecule type" value="Genomic_DNA"/>
</dbReference>
<dbReference type="EMBL" id="EU405646">
    <property type="protein sequence ID" value="ABZ03307.1"/>
    <property type="molecule type" value="Genomic_DNA"/>
</dbReference>
<dbReference type="EMBL" id="EU405647">
    <property type="protein sequence ID" value="ABZ03308.1"/>
    <property type="molecule type" value="Genomic_DNA"/>
</dbReference>
<dbReference type="EMBL" id="EU405648">
    <property type="protein sequence ID" value="ABZ03309.1"/>
    <property type="molecule type" value="Genomic_DNA"/>
</dbReference>
<dbReference type="EMBL" id="EU405649">
    <property type="protein sequence ID" value="ABZ03310.1"/>
    <property type="molecule type" value="Genomic_DNA"/>
</dbReference>
<dbReference type="EMBL" id="EU405650">
    <property type="protein sequence ID" value="ABZ03311.1"/>
    <property type="molecule type" value="Genomic_DNA"/>
</dbReference>
<dbReference type="EMBL" id="EU405652">
    <property type="protein sequence ID" value="ABZ03313.1"/>
    <property type="molecule type" value="Genomic_DNA"/>
</dbReference>
<dbReference type="EMBL" id="EU405653">
    <property type="protein sequence ID" value="ABZ03314.1"/>
    <property type="molecule type" value="Genomic_DNA"/>
</dbReference>
<dbReference type="EMBL" id="EU405654">
    <property type="protein sequence ID" value="ABZ03315.1"/>
    <property type="molecule type" value="Genomic_DNA"/>
</dbReference>
<dbReference type="EMBL" id="EU405655">
    <property type="protein sequence ID" value="ABZ03316.1"/>
    <property type="molecule type" value="Genomic_DNA"/>
</dbReference>
<dbReference type="EMBL" id="EU405656">
    <property type="protein sequence ID" value="ABZ03317.1"/>
    <property type="molecule type" value="Genomic_DNA"/>
</dbReference>
<dbReference type="EMBL" id="EU405657">
    <property type="protein sequence ID" value="ABZ03318.1"/>
    <property type="molecule type" value="Genomic_DNA"/>
</dbReference>
<dbReference type="EMBL" id="EU405659">
    <property type="protein sequence ID" value="ABZ03320.1"/>
    <property type="molecule type" value="Genomic_DNA"/>
</dbReference>
<dbReference type="EMBL" id="EU405662">
    <property type="protein sequence ID" value="ABZ03323.1"/>
    <property type="molecule type" value="Genomic_DNA"/>
</dbReference>
<dbReference type="EMBL" id="EU405663">
    <property type="protein sequence ID" value="ABZ03324.1"/>
    <property type="molecule type" value="Genomic_DNA"/>
</dbReference>
<dbReference type="EMBL" id="EU405664">
    <property type="protein sequence ID" value="ABZ03325.1"/>
    <property type="molecule type" value="Genomic_DNA"/>
</dbReference>
<dbReference type="EMBL" id="EU405665">
    <property type="protein sequence ID" value="ABZ03326.1"/>
    <property type="molecule type" value="Genomic_DNA"/>
</dbReference>
<dbReference type="EMBL" id="EU405670">
    <property type="protein sequence ID" value="ABZ03331.1"/>
    <property type="molecule type" value="Genomic_DNA"/>
</dbReference>
<dbReference type="EMBL" id="EU405671">
    <property type="protein sequence ID" value="ABZ03332.1"/>
    <property type="molecule type" value="Genomic_DNA"/>
</dbReference>
<dbReference type="EMBL" id="EU405672">
    <property type="protein sequence ID" value="ABZ03333.1"/>
    <property type="molecule type" value="Genomic_DNA"/>
</dbReference>
<dbReference type="EMBL" id="EU405676">
    <property type="protein sequence ID" value="ABZ03337.1"/>
    <property type="molecule type" value="Genomic_DNA"/>
</dbReference>
<dbReference type="EMBL" id="EU405677">
    <property type="protein sequence ID" value="ABZ03338.1"/>
    <property type="molecule type" value="Genomic_DNA"/>
</dbReference>
<dbReference type="EMBL" id="EU405678">
    <property type="protein sequence ID" value="ABZ03339.1"/>
    <property type="molecule type" value="Genomic_DNA"/>
</dbReference>
<dbReference type="EMBL" id="EU405679">
    <property type="protein sequence ID" value="ABZ03340.1"/>
    <property type="molecule type" value="Genomic_DNA"/>
</dbReference>
<dbReference type="EMBL" id="EU405680">
    <property type="protein sequence ID" value="ABZ03341.1"/>
    <property type="molecule type" value="Genomic_DNA"/>
</dbReference>
<dbReference type="EMBL" id="EU405681">
    <property type="protein sequence ID" value="ABZ03342.1"/>
    <property type="molecule type" value="Genomic_DNA"/>
</dbReference>
<dbReference type="EMBL" id="EU405682">
    <property type="protein sequence ID" value="ABZ03343.1"/>
    <property type="molecule type" value="Genomic_DNA"/>
</dbReference>
<dbReference type="EMBL" id="EU405683">
    <property type="protein sequence ID" value="ABZ03344.1"/>
    <property type="molecule type" value="Genomic_DNA"/>
</dbReference>
<dbReference type="EMBL" id="EU405686">
    <property type="protein sequence ID" value="ABZ03347.1"/>
    <property type="molecule type" value="Genomic_DNA"/>
</dbReference>
<dbReference type="EMBL" id="EU405687">
    <property type="protein sequence ID" value="ABZ03348.1"/>
    <property type="molecule type" value="Genomic_DNA"/>
</dbReference>
<dbReference type="EMBL" id="EU405688">
    <property type="protein sequence ID" value="ABZ03349.1"/>
    <property type="molecule type" value="Genomic_DNA"/>
</dbReference>
<dbReference type="EMBL" id="EU405689">
    <property type="protein sequence ID" value="ABZ03350.1"/>
    <property type="molecule type" value="Genomic_DNA"/>
</dbReference>
<dbReference type="EMBL" id="EU405690">
    <property type="protein sequence ID" value="ABZ03351.1"/>
    <property type="molecule type" value="Genomic_DNA"/>
</dbReference>
<dbReference type="EMBL" id="EU405691">
    <property type="protein sequence ID" value="ABZ03352.1"/>
    <property type="molecule type" value="Genomic_DNA"/>
</dbReference>
<dbReference type="EMBL" id="EU405692">
    <property type="protein sequence ID" value="ABZ03353.1"/>
    <property type="molecule type" value="Genomic_DNA"/>
</dbReference>
<dbReference type="EMBL" id="EU405693">
    <property type="protein sequence ID" value="ABZ03354.1"/>
    <property type="molecule type" value="Genomic_DNA"/>
</dbReference>
<dbReference type="EMBL" id="EU405694">
    <property type="protein sequence ID" value="ABZ03355.1"/>
    <property type="molecule type" value="Genomic_DNA"/>
</dbReference>
<dbReference type="EMBL" id="EU405695">
    <property type="protein sequence ID" value="ABZ03356.1"/>
    <property type="molecule type" value="Genomic_DNA"/>
</dbReference>
<dbReference type="EMBL" id="EU405696">
    <property type="protein sequence ID" value="ABZ03357.1"/>
    <property type="molecule type" value="Genomic_DNA"/>
</dbReference>
<dbReference type="EMBL" id="EU405697">
    <property type="protein sequence ID" value="ABZ03358.1"/>
    <property type="molecule type" value="Genomic_DNA"/>
</dbReference>
<dbReference type="EMBL" id="EU405698">
    <property type="protein sequence ID" value="ABZ03359.1"/>
    <property type="molecule type" value="Genomic_DNA"/>
</dbReference>
<dbReference type="EMBL" id="EU405700">
    <property type="protein sequence ID" value="ABZ03361.1"/>
    <property type="molecule type" value="Genomic_DNA"/>
</dbReference>
<dbReference type="EMBL" id="EU405702">
    <property type="protein sequence ID" value="ABZ03363.1"/>
    <property type="molecule type" value="Genomic_DNA"/>
</dbReference>
<dbReference type="EMBL" id="EU405703">
    <property type="protein sequence ID" value="ABZ03364.1"/>
    <property type="molecule type" value="Genomic_DNA"/>
</dbReference>
<dbReference type="EMBL" id="EU405704">
    <property type="protein sequence ID" value="ABZ03365.1"/>
    <property type="molecule type" value="Genomic_DNA"/>
</dbReference>
<dbReference type="EMBL" id="EU405705">
    <property type="protein sequence ID" value="ABZ03366.1"/>
    <property type="molecule type" value="Genomic_DNA"/>
</dbReference>
<dbReference type="EMBL" id="EU405706">
    <property type="protein sequence ID" value="ABZ03367.1"/>
    <property type="molecule type" value="Genomic_DNA"/>
</dbReference>
<dbReference type="EMBL" id="EU405707">
    <property type="protein sequence ID" value="ABZ03368.1"/>
    <property type="molecule type" value="Genomic_DNA"/>
</dbReference>
<dbReference type="EMBL" id="EU405708">
    <property type="protein sequence ID" value="ABZ03369.1"/>
    <property type="molecule type" value="Genomic_DNA"/>
</dbReference>
<dbReference type="EMBL" id="EU405709">
    <property type="protein sequence ID" value="ABZ03370.1"/>
    <property type="molecule type" value="Genomic_DNA"/>
</dbReference>
<dbReference type="EMBL" id="EU405710">
    <property type="protein sequence ID" value="ABZ03371.1"/>
    <property type="molecule type" value="Genomic_DNA"/>
</dbReference>
<dbReference type="EMBL" id="EU405711">
    <property type="protein sequence ID" value="ABZ03372.1"/>
    <property type="molecule type" value="Genomic_DNA"/>
</dbReference>
<dbReference type="EMBL" id="EU405715">
    <property type="protein sequence ID" value="ABZ03376.1"/>
    <property type="molecule type" value="Genomic_DNA"/>
</dbReference>
<dbReference type="EMBL" id="EU405717">
    <property type="protein sequence ID" value="ABZ03378.1"/>
    <property type="molecule type" value="Genomic_DNA"/>
</dbReference>
<dbReference type="RefSeq" id="NP_196250.1">
    <property type="nucleotide sequence ID" value="NM_120715.3"/>
</dbReference>
<dbReference type="FunCoup" id="Q9FNH6">
    <property type="interactions" value="28"/>
</dbReference>
<dbReference type="IntAct" id="Q9FNH6">
    <property type="interactions" value="362"/>
</dbReference>
<dbReference type="STRING" id="3702.Q9FNH6"/>
<dbReference type="GlyCosmos" id="Q9FNH6">
    <property type="glycosylation" value="4 sites, No reported glycans"/>
</dbReference>
<dbReference type="GlyGen" id="Q9FNH6">
    <property type="glycosylation" value="4 sites"/>
</dbReference>
<dbReference type="SwissPalm" id="Q9FNH6"/>
<dbReference type="PaxDb" id="3702-AT5G06320.1"/>
<dbReference type="ProteomicsDB" id="250591"/>
<dbReference type="EnsemblPlants" id="AT5G06320.1">
    <property type="protein sequence ID" value="AT5G06320.1"/>
    <property type="gene ID" value="AT5G06320"/>
</dbReference>
<dbReference type="GeneID" id="830520"/>
<dbReference type="Gramene" id="AT5G06320.1">
    <property type="protein sequence ID" value="AT5G06320.1"/>
    <property type="gene ID" value="AT5G06320"/>
</dbReference>
<dbReference type="KEGG" id="ath:AT5G06320"/>
<dbReference type="Araport" id="AT5G06320"/>
<dbReference type="TAIR" id="AT5G06320">
    <property type="gene designation" value="NHL3"/>
</dbReference>
<dbReference type="eggNOG" id="ENOG502QUR9">
    <property type="taxonomic scope" value="Eukaryota"/>
</dbReference>
<dbReference type="HOGENOM" id="CLU_051752_2_0_1"/>
<dbReference type="InParanoid" id="Q9FNH6"/>
<dbReference type="OMA" id="MSEKQSH"/>
<dbReference type="OrthoDB" id="1889094at2759"/>
<dbReference type="PhylomeDB" id="Q9FNH6"/>
<dbReference type="PRO" id="PR:Q9FNH6"/>
<dbReference type="Proteomes" id="UP000006548">
    <property type="component" value="Chromosome 5"/>
</dbReference>
<dbReference type="ExpressionAtlas" id="Q9FNH6">
    <property type="expression patterns" value="baseline and differential"/>
</dbReference>
<dbReference type="GO" id="GO:0005794">
    <property type="term" value="C:Golgi apparatus"/>
    <property type="evidence" value="ECO:0007005"/>
    <property type="project" value="TAIR"/>
</dbReference>
<dbReference type="GO" id="GO:0000325">
    <property type="term" value="C:plant-type vacuole"/>
    <property type="evidence" value="ECO:0007005"/>
    <property type="project" value="TAIR"/>
</dbReference>
<dbReference type="GO" id="GO:0005886">
    <property type="term" value="C:plasma membrane"/>
    <property type="evidence" value="ECO:0000314"/>
    <property type="project" value="TAIR"/>
</dbReference>
<dbReference type="GO" id="GO:0009506">
    <property type="term" value="C:plasmodesma"/>
    <property type="evidence" value="ECO:0007005"/>
    <property type="project" value="TAIR"/>
</dbReference>
<dbReference type="GO" id="GO:0003729">
    <property type="term" value="F:mRNA binding"/>
    <property type="evidence" value="ECO:0000314"/>
    <property type="project" value="TAIR"/>
</dbReference>
<dbReference type="GO" id="GO:0071456">
    <property type="term" value="P:cellular response to hypoxia"/>
    <property type="evidence" value="ECO:0007007"/>
    <property type="project" value="TAIR"/>
</dbReference>
<dbReference type="GO" id="GO:0042742">
    <property type="term" value="P:defense response to bacterium"/>
    <property type="evidence" value="ECO:0000315"/>
    <property type="project" value="TAIR"/>
</dbReference>
<dbReference type="GO" id="GO:0051607">
    <property type="term" value="P:defense response to virus"/>
    <property type="evidence" value="ECO:0000270"/>
    <property type="project" value="TAIR"/>
</dbReference>
<dbReference type="GO" id="GO:0009617">
    <property type="term" value="P:response to bacterium"/>
    <property type="evidence" value="ECO:0000270"/>
    <property type="project" value="UniProtKB"/>
</dbReference>
<dbReference type="GO" id="GO:0009751">
    <property type="term" value="P:response to salicylic acid"/>
    <property type="evidence" value="ECO:0000270"/>
    <property type="project" value="UniProtKB"/>
</dbReference>
<dbReference type="GO" id="GO:0009611">
    <property type="term" value="P:response to wounding"/>
    <property type="evidence" value="ECO:0000270"/>
    <property type="project" value="UniProtKB"/>
</dbReference>
<dbReference type="InterPro" id="IPR004864">
    <property type="entry name" value="LEA_2"/>
</dbReference>
<dbReference type="InterPro" id="IPR044839">
    <property type="entry name" value="NDR1-like"/>
</dbReference>
<dbReference type="PANTHER" id="PTHR31234">
    <property type="entry name" value="LATE EMBRYOGENESIS ABUNDANT (LEA) HYDROXYPROLINE-RICH GLYCOPROTEIN FAMILY"/>
    <property type="match status" value="1"/>
</dbReference>
<dbReference type="PANTHER" id="PTHR31234:SF2">
    <property type="entry name" value="OS05G0199100 PROTEIN"/>
    <property type="match status" value="1"/>
</dbReference>
<dbReference type="Pfam" id="PF03168">
    <property type="entry name" value="LEA_2"/>
    <property type="match status" value="1"/>
</dbReference>
<accession>Q9FNH6</accession>
<accession>B0ZVP9</accession>
<accession>Q94K35</accession>
<accession>Q9LKQ2</accession>
<proteinExistence type="evidence at protein level"/>
<name>NHL3_ARATH</name>